<proteinExistence type="evidence at transcript level"/>
<sequence>MPSPLILCRYLPRELSPTVDSRSCSSPLVASRAGKFLGATPPRAPRLSRRLAWCFIDWGQVCLLHRLGSGGFGSVYKATYHGVPVAIKQVNKCTRTLRASQRNFWAELNIARLHHDNIIRVVAASTRTPEGSNSLGTIIMEFGGNVTLHQVIYGATRSPEPLSCREQLSLGKCLKYSLDIVNGLLFLHSQSILHLDLKPANILISEKDVCKISDFGCSQKLQDLRCRPSLHHIGGTYTHQAPELLKGEIATPKADIYSFGITLWQMTTREVPYSGEPQYVQYAVVAYNLRPHWQAVFTASLTGKTLQNNVQSCWEARALQRPGAELLQKDLKAFRGALG</sequence>
<comment type="function">
    <text evidence="1">Serine/threonine kinase involved in the regulation of MAPK signaling. Is an activator of the ERK1/2 signaling cascade playing an essential role in the stimulation of oocyte maturation.</text>
</comment>
<comment type="catalytic activity">
    <reaction>
        <text>L-seryl-[protein] + ATP = O-phospho-L-seryl-[protein] + ADP + H(+)</text>
        <dbReference type="Rhea" id="RHEA:17989"/>
        <dbReference type="Rhea" id="RHEA-COMP:9863"/>
        <dbReference type="Rhea" id="RHEA-COMP:11604"/>
        <dbReference type="ChEBI" id="CHEBI:15378"/>
        <dbReference type="ChEBI" id="CHEBI:29999"/>
        <dbReference type="ChEBI" id="CHEBI:30616"/>
        <dbReference type="ChEBI" id="CHEBI:83421"/>
        <dbReference type="ChEBI" id="CHEBI:456216"/>
        <dbReference type="EC" id="2.7.11.1"/>
    </reaction>
</comment>
<comment type="catalytic activity">
    <reaction>
        <text>L-threonyl-[protein] + ATP = O-phospho-L-threonyl-[protein] + ADP + H(+)</text>
        <dbReference type="Rhea" id="RHEA:46608"/>
        <dbReference type="Rhea" id="RHEA-COMP:11060"/>
        <dbReference type="Rhea" id="RHEA-COMP:11605"/>
        <dbReference type="ChEBI" id="CHEBI:15378"/>
        <dbReference type="ChEBI" id="CHEBI:30013"/>
        <dbReference type="ChEBI" id="CHEBI:30616"/>
        <dbReference type="ChEBI" id="CHEBI:61977"/>
        <dbReference type="ChEBI" id="CHEBI:456216"/>
        <dbReference type="EC" id="2.7.11.1"/>
    </reaction>
</comment>
<comment type="subunit">
    <text evidence="1">Interacts with MAP2K1/MEK1.</text>
</comment>
<comment type="subcellular location">
    <subcellularLocation>
        <location evidence="1">Cytoplasm</location>
    </subcellularLocation>
</comment>
<comment type="tissue specificity">
    <text evidence="4">Expressed mainly in gonadal tissues, and cardiac and skeletal muscles.</text>
</comment>
<comment type="similarity">
    <text evidence="2">Belongs to the protein kinase superfamily. Ser/Thr protein kinase family.</text>
</comment>
<evidence type="ECO:0000250" key="1">
    <source>
        <dbReference type="UniProtKB" id="P00540"/>
    </source>
</evidence>
<evidence type="ECO:0000255" key="2">
    <source>
        <dbReference type="PROSITE-ProRule" id="PRU00159"/>
    </source>
</evidence>
<evidence type="ECO:0000255" key="3">
    <source>
        <dbReference type="PROSITE-ProRule" id="PRU10027"/>
    </source>
</evidence>
<evidence type="ECO:0000269" key="4">
    <source>
    </source>
</evidence>
<evidence type="ECO:0000305" key="5"/>
<evidence type="ECO:0000312" key="6">
    <source>
        <dbReference type="RGD" id="3103"/>
    </source>
</evidence>
<reference key="1">
    <citation type="journal article" date="1984" name="Nucleic Acids Res.">
        <title>Complete c-mos (rat) nucleotide sequence: presence of conserved domains in c-mos proteins.</title>
        <authorList>
            <person name="van der Hoorn F.A."/>
            <person name="Firzlaff J."/>
        </authorList>
    </citation>
    <scope>NUCLEOTIDE SEQUENCE [GENOMIC DNA]</scope>
</reference>
<reference key="2">
    <citation type="journal article" date="1990" name="Oncogene">
        <title>Rat myogenic c-mos cDNA: cloning sequence analysis and regulation during muscle development.</title>
        <authorList>
            <person name="Leibovitch S.A."/>
            <person name="Lenormand J.-L."/>
            <person name="Leibovitch M.-P."/>
            <person name="Guiller M."/>
            <person name="Mallard L."/>
            <person name="Harel J."/>
        </authorList>
    </citation>
    <scope>NUCLEOTIDE SEQUENCE [MRNA]</scope>
    <source>
        <strain>Wistar</strain>
        <tissue>Skeletal muscle</tissue>
    </source>
</reference>
<feature type="chain" id="PRO_0000086347" description="Proto-oncogene serine/threonine-protein kinase mos">
    <location>
        <begin position="1"/>
        <end position="339"/>
    </location>
</feature>
<feature type="domain" description="Protein kinase" evidence="2">
    <location>
        <begin position="61"/>
        <end position="335"/>
    </location>
</feature>
<feature type="active site" description="Proton acceptor" evidence="2 3">
    <location>
        <position position="196"/>
    </location>
</feature>
<feature type="binding site" evidence="2">
    <location>
        <begin position="67"/>
        <end position="75"/>
    </location>
    <ligand>
        <name>ATP</name>
        <dbReference type="ChEBI" id="CHEBI:30616"/>
    </ligand>
</feature>
<feature type="binding site" evidence="2">
    <location>
        <position position="88"/>
    </location>
    <ligand>
        <name>ATP</name>
        <dbReference type="ChEBI" id="CHEBI:30616"/>
    </ligand>
</feature>
<feature type="sequence conflict" description="In Ref. 2; CAA37128." evidence="5" ref="2">
    <original>L</original>
    <variation>V</variation>
    <location>
        <position position="47"/>
    </location>
</feature>
<feature type="sequence conflict" description="In Ref. 2; CAA37128." evidence="5" ref="2">
    <original>R</original>
    <variation>A</variation>
    <location>
        <position position="102"/>
    </location>
</feature>
<accession>P00539</accession>
<name>MOS_RAT</name>
<organism>
    <name type="scientific">Rattus norvegicus</name>
    <name type="common">Rat</name>
    <dbReference type="NCBI Taxonomy" id="10116"/>
    <lineage>
        <taxon>Eukaryota</taxon>
        <taxon>Metazoa</taxon>
        <taxon>Chordata</taxon>
        <taxon>Craniata</taxon>
        <taxon>Vertebrata</taxon>
        <taxon>Euteleostomi</taxon>
        <taxon>Mammalia</taxon>
        <taxon>Eutheria</taxon>
        <taxon>Euarchontoglires</taxon>
        <taxon>Glires</taxon>
        <taxon>Rodentia</taxon>
        <taxon>Myomorpha</taxon>
        <taxon>Muroidea</taxon>
        <taxon>Muridae</taxon>
        <taxon>Murinae</taxon>
        <taxon>Rattus</taxon>
    </lineage>
</organism>
<dbReference type="EC" id="2.7.11.1"/>
<dbReference type="EMBL" id="X00422">
    <property type="protein sequence ID" value="CAA25123.1"/>
    <property type="molecule type" value="Genomic_DNA"/>
</dbReference>
<dbReference type="EMBL" id="X52952">
    <property type="protein sequence ID" value="CAA37128.1"/>
    <property type="molecule type" value="mRNA"/>
</dbReference>
<dbReference type="PIR" id="A00648">
    <property type="entry name" value="TVRTM"/>
</dbReference>
<dbReference type="SMR" id="P00539"/>
<dbReference type="FunCoup" id="P00539">
    <property type="interactions" value="268"/>
</dbReference>
<dbReference type="STRING" id="10116.ENSRNOP00000064243"/>
<dbReference type="PhosphoSitePlus" id="P00539"/>
<dbReference type="PaxDb" id="10116-ENSRNOP00000064243"/>
<dbReference type="UCSC" id="RGD:3103">
    <property type="organism name" value="rat"/>
</dbReference>
<dbReference type="AGR" id="RGD:3103"/>
<dbReference type="RGD" id="3103">
    <property type="gene designation" value="Mos"/>
</dbReference>
<dbReference type="eggNOG" id="KOG0192">
    <property type="taxonomic scope" value="Eukaryota"/>
</dbReference>
<dbReference type="InParanoid" id="P00539"/>
<dbReference type="PhylomeDB" id="P00539"/>
<dbReference type="BRENDA" id="2.7.10.2">
    <property type="organism ID" value="5301"/>
</dbReference>
<dbReference type="PRO" id="PR:P00539"/>
<dbReference type="Proteomes" id="UP000002494">
    <property type="component" value="Unplaced"/>
</dbReference>
<dbReference type="GO" id="GO:0005737">
    <property type="term" value="C:cytoplasm"/>
    <property type="evidence" value="ECO:0000266"/>
    <property type="project" value="RGD"/>
</dbReference>
<dbReference type="GO" id="GO:0005829">
    <property type="term" value="C:cytosol"/>
    <property type="evidence" value="ECO:0000314"/>
    <property type="project" value="RGD"/>
</dbReference>
<dbReference type="GO" id="GO:0005524">
    <property type="term" value="F:ATP binding"/>
    <property type="evidence" value="ECO:0007669"/>
    <property type="project" value="UniProtKB-KW"/>
</dbReference>
<dbReference type="GO" id="GO:0004709">
    <property type="term" value="F:MAP kinase kinase kinase activity"/>
    <property type="evidence" value="ECO:0000250"/>
    <property type="project" value="UniProtKB"/>
</dbReference>
<dbReference type="GO" id="GO:0043426">
    <property type="term" value="F:MRF binding"/>
    <property type="evidence" value="ECO:0000315"/>
    <property type="project" value="RGD"/>
</dbReference>
<dbReference type="GO" id="GO:0004672">
    <property type="term" value="F:protein kinase activity"/>
    <property type="evidence" value="ECO:0000318"/>
    <property type="project" value="GO_Central"/>
</dbReference>
<dbReference type="GO" id="GO:0106310">
    <property type="term" value="F:protein serine kinase activity"/>
    <property type="evidence" value="ECO:0000314"/>
    <property type="project" value="RGD"/>
</dbReference>
<dbReference type="GO" id="GO:0004674">
    <property type="term" value="F:protein serine/threonine kinase activity"/>
    <property type="evidence" value="ECO:0000314"/>
    <property type="project" value="UniProtKB"/>
</dbReference>
<dbReference type="GO" id="GO:0071320">
    <property type="term" value="P:cellular response to cAMP"/>
    <property type="evidence" value="ECO:0000270"/>
    <property type="project" value="RGD"/>
</dbReference>
<dbReference type="GO" id="GO:1990090">
    <property type="term" value="P:cellular response to nerve growth factor stimulus"/>
    <property type="evidence" value="ECO:0000270"/>
    <property type="project" value="RGD"/>
</dbReference>
<dbReference type="GO" id="GO:0006325">
    <property type="term" value="P:chromatin organization"/>
    <property type="evidence" value="ECO:0000250"/>
    <property type="project" value="UniProtKB"/>
</dbReference>
<dbReference type="GO" id="GO:0070371">
    <property type="term" value="P:ERK1 and ERK2 cascade"/>
    <property type="evidence" value="ECO:0000266"/>
    <property type="project" value="RGD"/>
</dbReference>
<dbReference type="GO" id="GO:0051296">
    <property type="term" value="P:establishment of meiotic spindle orientation"/>
    <property type="evidence" value="ECO:0000250"/>
    <property type="project" value="UniProtKB"/>
</dbReference>
<dbReference type="GO" id="GO:0035556">
    <property type="term" value="P:intracellular signal transduction"/>
    <property type="evidence" value="ECO:0000304"/>
    <property type="project" value="RGD"/>
</dbReference>
<dbReference type="GO" id="GO:0000165">
    <property type="term" value="P:MAPK cascade"/>
    <property type="evidence" value="ECO:0000250"/>
    <property type="project" value="UniProtKB"/>
</dbReference>
<dbReference type="GO" id="GO:1903537">
    <property type="term" value="P:meiotic cell cycle process involved in oocyte maturation"/>
    <property type="evidence" value="ECO:0000270"/>
    <property type="project" value="RGD"/>
</dbReference>
<dbReference type="GO" id="GO:0000212">
    <property type="term" value="P:meiotic spindle organization"/>
    <property type="evidence" value="ECO:0000250"/>
    <property type="project" value="UniProtKB"/>
</dbReference>
<dbReference type="GO" id="GO:1902103">
    <property type="term" value="P:negative regulation of metaphase/anaphase transition of meiotic cell cycle"/>
    <property type="evidence" value="ECO:0000250"/>
    <property type="project" value="UniProtKB"/>
</dbReference>
<dbReference type="GO" id="GO:0001556">
    <property type="term" value="P:oocyte maturation"/>
    <property type="evidence" value="ECO:0000250"/>
    <property type="project" value="UniProtKB"/>
</dbReference>
<dbReference type="GO" id="GO:0070374">
    <property type="term" value="P:positive regulation of ERK1 and ERK2 cascade"/>
    <property type="evidence" value="ECO:0000250"/>
    <property type="project" value="UniProtKB"/>
</dbReference>
<dbReference type="GO" id="GO:0043410">
    <property type="term" value="P:positive regulation of MAPK cascade"/>
    <property type="evidence" value="ECO:0000250"/>
    <property type="project" value="UniProtKB"/>
</dbReference>
<dbReference type="GO" id="GO:0045663">
    <property type="term" value="P:positive regulation of myoblast differentiation"/>
    <property type="evidence" value="ECO:0000314"/>
    <property type="project" value="RGD"/>
</dbReference>
<dbReference type="GO" id="GO:0046777">
    <property type="term" value="P:protein autophosphorylation"/>
    <property type="evidence" value="ECO:0000250"/>
    <property type="project" value="UniProtKB"/>
</dbReference>
<dbReference type="GO" id="GO:0040020">
    <property type="term" value="P:regulation of meiotic nuclear division"/>
    <property type="evidence" value="ECO:0000266"/>
    <property type="project" value="RGD"/>
</dbReference>
<dbReference type="GO" id="GO:0007165">
    <property type="term" value="P:signal transduction"/>
    <property type="evidence" value="ECO:0000318"/>
    <property type="project" value="GO_Central"/>
</dbReference>
<dbReference type="GO" id="GO:0007519">
    <property type="term" value="P:skeletal muscle tissue development"/>
    <property type="evidence" value="ECO:0000270"/>
    <property type="project" value="RGD"/>
</dbReference>
<dbReference type="GO" id="GO:0048137">
    <property type="term" value="P:spermatocyte division"/>
    <property type="evidence" value="ECO:0000270"/>
    <property type="project" value="RGD"/>
</dbReference>
<dbReference type="GO" id="GO:0007283">
    <property type="term" value="P:spermatogenesis"/>
    <property type="evidence" value="ECO:0000303"/>
    <property type="project" value="RGD"/>
</dbReference>
<dbReference type="CDD" id="cd13979">
    <property type="entry name" value="STKc_Mos"/>
    <property type="match status" value="1"/>
</dbReference>
<dbReference type="FunFam" id="1.10.510.10:FF:000490">
    <property type="entry name" value="Proto-oncogene serine/threonine-protein kinase mos"/>
    <property type="match status" value="1"/>
</dbReference>
<dbReference type="FunFam" id="3.30.200.20:FF:000316">
    <property type="entry name" value="Proto-oncogene serine/threonine-protein kinase mos"/>
    <property type="match status" value="1"/>
</dbReference>
<dbReference type="Gene3D" id="3.30.200.20">
    <property type="entry name" value="Phosphorylase Kinase, domain 1"/>
    <property type="match status" value="1"/>
</dbReference>
<dbReference type="Gene3D" id="1.10.510.10">
    <property type="entry name" value="Transferase(Phosphotransferase) domain 1"/>
    <property type="match status" value="1"/>
</dbReference>
<dbReference type="InterPro" id="IPR011009">
    <property type="entry name" value="Kinase-like_dom_sf"/>
</dbReference>
<dbReference type="InterPro" id="IPR000719">
    <property type="entry name" value="Prot_kinase_dom"/>
</dbReference>
<dbReference type="InterPro" id="IPR017441">
    <property type="entry name" value="Protein_kinase_ATP_BS"/>
</dbReference>
<dbReference type="InterPro" id="IPR008271">
    <property type="entry name" value="Ser/Thr_kinase_AS"/>
</dbReference>
<dbReference type="InterPro" id="IPR051681">
    <property type="entry name" value="Ser/Thr_Kinases-Pseudokinases"/>
</dbReference>
<dbReference type="PANTHER" id="PTHR44329">
    <property type="entry name" value="SERINE/THREONINE-PROTEIN KINASE TNNI3K-RELATED"/>
    <property type="match status" value="1"/>
</dbReference>
<dbReference type="PANTHER" id="PTHR44329:SF285">
    <property type="entry name" value="V-MOS MOLONEY MURINE SARCOMA VIRAL ONCO HOMOLOG"/>
    <property type="match status" value="1"/>
</dbReference>
<dbReference type="Pfam" id="PF00069">
    <property type="entry name" value="Pkinase"/>
    <property type="match status" value="1"/>
</dbReference>
<dbReference type="SMART" id="SM00220">
    <property type="entry name" value="S_TKc"/>
    <property type="match status" value="1"/>
</dbReference>
<dbReference type="SUPFAM" id="SSF56112">
    <property type="entry name" value="Protein kinase-like (PK-like)"/>
    <property type="match status" value="1"/>
</dbReference>
<dbReference type="PROSITE" id="PS00107">
    <property type="entry name" value="PROTEIN_KINASE_ATP"/>
    <property type="match status" value="1"/>
</dbReference>
<dbReference type="PROSITE" id="PS50011">
    <property type="entry name" value="PROTEIN_KINASE_DOM"/>
    <property type="match status" value="1"/>
</dbReference>
<dbReference type="PROSITE" id="PS00108">
    <property type="entry name" value="PROTEIN_KINASE_ST"/>
    <property type="match status" value="1"/>
</dbReference>
<keyword id="KW-0067">ATP-binding</keyword>
<keyword id="KW-0963">Cytoplasm</keyword>
<keyword id="KW-0418">Kinase</keyword>
<keyword id="KW-0547">Nucleotide-binding</keyword>
<keyword id="KW-0656">Proto-oncogene</keyword>
<keyword id="KW-1185">Reference proteome</keyword>
<keyword id="KW-0723">Serine/threonine-protein kinase</keyword>
<keyword id="KW-0808">Transferase</keyword>
<gene>
    <name evidence="6" type="primary">Mos</name>
</gene>
<protein>
    <recommendedName>
        <fullName evidence="5">Proto-oncogene serine/threonine-protein kinase mos</fullName>
        <ecNumber>2.7.11.1</ecNumber>
    </recommendedName>
    <alternativeName>
        <fullName>Oocyte maturation factor mos</fullName>
    </alternativeName>
    <alternativeName>
        <fullName>Proto-oncogene c-Mos</fullName>
    </alternativeName>
</protein>